<evidence type="ECO:0000255" key="1">
    <source>
        <dbReference type="HAMAP-Rule" id="MF_00208"/>
    </source>
</evidence>
<sequence>MKKLTALWDIDEQLDSVHRDIELQEMILDSRLANTGCLFVAIKGHRVDGREFIMQAIQNGASAVLFETDLVEQHLTVSFEQNIPLIAYYELSKHLSHIADRFYSSPSQRLTLVGVTGTNGKTTIAQLLAQWTQILGHTSAVMGTIGNGLFGQIKEASNTTGSAIEIQSSLDKFIRQGADFAAIEVSSHGLVQHRVEALTFRAGIFTNLSRDHLDYHHTMENYAQAKKRLFSELNCQHKILNVDDEIGATWLIELSKDDPDVVAVSCRADYQPDTKNWLKATALSFHSKGTTIEFASSWGNGILSSPLIGGFNVSNLLLVLATLLSLGYDIGKLLATVRQLTGVCGRMEMLSAKHKATVIVDYAHTPDALENALQSAAVHCQGKLWCIFGCGGDRDRGKRPLMAAIAEKFADSVIVTDDNPRTENPEQIMQDILTGFQQSSAVQIIHQREQAIKTALQSAVENDVVLIAGKGHENYQIIGTTKYHFSDQEIVKKYF</sequence>
<organism>
    <name type="scientific">Histophilus somni (strain 129Pt)</name>
    <name type="common">Haemophilus somnus</name>
    <dbReference type="NCBI Taxonomy" id="205914"/>
    <lineage>
        <taxon>Bacteria</taxon>
        <taxon>Pseudomonadati</taxon>
        <taxon>Pseudomonadota</taxon>
        <taxon>Gammaproteobacteria</taxon>
        <taxon>Pasteurellales</taxon>
        <taxon>Pasteurellaceae</taxon>
        <taxon>Histophilus</taxon>
    </lineage>
</organism>
<name>MURE_HISS1</name>
<comment type="function">
    <text evidence="1">Catalyzes the addition of meso-diaminopimelic acid to the nucleotide precursor UDP-N-acetylmuramoyl-L-alanyl-D-glutamate (UMAG) in the biosynthesis of bacterial cell-wall peptidoglycan.</text>
</comment>
<comment type="catalytic activity">
    <reaction evidence="1">
        <text>UDP-N-acetyl-alpha-D-muramoyl-L-alanyl-D-glutamate + meso-2,6-diaminopimelate + ATP = UDP-N-acetyl-alpha-D-muramoyl-L-alanyl-gamma-D-glutamyl-meso-2,6-diaminopimelate + ADP + phosphate + H(+)</text>
        <dbReference type="Rhea" id="RHEA:23676"/>
        <dbReference type="ChEBI" id="CHEBI:15378"/>
        <dbReference type="ChEBI" id="CHEBI:30616"/>
        <dbReference type="ChEBI" id="CHEBI:43474"/>
        <dbReference type="ChEBI" id="CHEBI:57791"/>
        <dbReference type="ChEBI" id="CHEBI:83900"/>
        <dbReference type="ChEBI" id="CHEBI:83905"/>
        <dbReference type="ChEBI" id="CHEBI:456216"/>
        <dbReference type="EC" id="6.3.2.13"/>
    </reaction>
</comment>
<comment type="cofactor">
    <cofactor evidence="1">
        <name>Mg(2+)</name>
        <dbReference type="ChEBI" id="CHEBI:18420"/>
    </cofactor>
</comment>
<comment type="pathway">
    <text evidence="1">Cell wall biogenesis; peptidoglycan biosynthesis.</text>
</comment>
<comment type="subcellular location">
    <subcellularLocation>
        <location evidence="1">Cytoplasm</location>
    </subcellularLocation>
</comment>
<comment type="PTM">
    <text evidence="1">Carboxylation is probably crucial for Mg(2+) binding and, consequently, for the gamma-phosphate positioning of ATP.</text>
</comment>
<comment type="similarity">
    <text evidence="1">Belongs to the MurCDEF family. MurE subfamily.</text>
</comment>
<feature type="chain" id="PRO_1000012359" description="UDP-N-acetylmuramoyl-L-alanyl-D-glutamate--2,6-diaminopimelate ligase">
    <location>
        <begin position="1"/>
        <end position="495"/>
    </location>
</feature>
<feature type="short sequence motif" description="Meso-diaminopimelate recognition motif">
    <location>
        <begin position="418"/>
        <end position="421"/>
    </location>
</feature>
<feature type="binding site" evidence="1">
    <location>
        <position position="28"/>
    </location>
    <ligand>
        <name>UDP-N-acetyl-alpha-D-muramoyl-L-alanyl-D-glutamate</name>
        <dbReference type="ChEBI" id="CHEBI:83900"/>
    </ligand>
</feature>
<feature type="binding site" evidence="1">
    <location>
        <position position="30"/>
    </location>
    <ligand>
        <name>UDP-N-acetyl-alpha-D-muramoyl-L-alanyl-D-glutamate</name>
        <dbReference type="ChEBI" id="CHEBI:83900"/>
    </ligand>
</feature>
<feature type="binding site" evidence="1">
    <location>
        <begin position="45"/>
        <end position="47"/>
    </location>
    <ligand>
        <name>UDP-N-acetyl-alpha-D-muramoyl-L-alanyl-D-glutamate</name>
        <dbReference type="ChEBI" id="CHEBI:83900"/>
    </ligand>
</feature>
<feature type="binding site" evidence="1">
    <location>
        <begin position="117"/>
        <end position="123"/>
    </location>
    <ligand>
        <name>ATP</name>
        <dbReference type="ChEBI" id="CHEBI:30616"/>
    </ligand>
</feature>
<feature type="binding site" evidence="1">
    <location>
        <position position="158"/>
    </location>
    <ligand>
        <name>UDP-N-acetyl-alpha-D-muramoyl-L-alanyl-D-glutamate</name>
        <dbReference type="ChEBI" id="CHEBI:83900"/>
    </ligand>
</feature>
<feature type="binding site" evidence="1">
    <location>
        <begin position="159"/>
        <end position="160"/>
    </location>
    <ligand>
        <name>UDP-N-acetyl-alpha-D-muramoyl-L-alanyl-D-glutamate</name>
        <dbReference type="ChEBI" id="CHEBI:83900"/>
    </ligand>
</feature>
<feature type="binding site" evidence="1">
    <location>
        <position position="186"/>
    </location>
    <ligand>
        <name>UDP-N-acetyl-alpha-D-muramoyl-L-alanyl-D-glutamate</name>
        <dbReference type="ChEBI" id="CHEBI:83900"/>
    </ligand>
</feature>
<feature type="binding site" evidence="1">
    <location>
        <position position="192"/>
    </location>
    <ligand>
        <name>UDP-N-acetyl-alpha-D-muramoyl-L-alanyl-D-glutamate</name>
        <dbReference type="ChEBI" id="CHEBI:83900"/>
    </ligand>
</feature>
<feature type="binding site" evidence="1">
    <location>
        <position position="194"/>
    </location>
    <ligand>
        <name>UDP-N-acetyl-alpha-D-muramoyl-L-alanyl-D-glutamate</name>
        <dbReference type="ChEBI" id="CHEBI:83900"/>
    </ligand>
</feature>
<feature type="binding site" evidence="1">
    <location>
        <position position="394"/>
    </location>
    <ligand>
        <name>meso-2,6-diaminopimelate</name>
        <dbReference type="ChEBI" id="CHEBI:57791"/>
    </ligand>
</feature>
<feature type="binding site" evidence="1">
    <location>
        <begin position="418"/>
        <end position="421"/>
    </location>
    <ligand>
        <name>meso-2,6-diaminopimelate</name>
        <dbReference type="ChEBI" id="CHEBI:57791"/>
    </ligand>
</feature>
<feature type="binding site" evidence="1">
    <location>
        <position position="469"/>
    </location>
    <ligand>
        <name>meso-2,6-diaminopimelate</name>
        <dbReference type="ChEBI" id="CHEBI:57791"/>
    </ligand>
</feature>
<feature type="binding site" evidence="1">
    <location>
        <position position="473"/>
    </location>
    <ligand>
        <name>meso-2,6-diaminopimelate</name>
        <dbReference type="ChEBI" id="CHEBI:57791"/>
    </ligand>
</feature>
<feature type="modified residue" description="N6-carboxylysine" evidence="1">
    <location>
        <position position="226"/>
    </location>
</feature>
<keyword id="KW-0067">ATP-binding</keyword>
<keyword id="KW-0131">Cell cycle</keyword>
<keyword id="KW-0132">Cell division</keyword>
<keyword id="KW-0133">Cell shape</keyword>
<keyword id="KW-0961">Cell wall biogenesis/degradation</keyword>
<keyword id="KW-0963">Cytoplasm</keyword>
<keyword id="KW-0436">Ligase</keyword>
<keyword id="KW-0460">Magnesium</keyword>
<keyword id="KW-0547">Nucleotide-binding</keyword>
<keyword id="KW-0573">Peptidoglycan synthesis</keyword>
<protein>
    <recommendedName>
        <fullName evidence="1">UDP-N-acetylmuramoyl-L-alanyl-D-glutamate--2,6-diaminopimelate ligase</fullName>
        <ecNumber evidence="1">6.3.2.13</ecNumber>
    </recommendedName>
    <alternativeName>
        <fullName evidence="1">Meso-A2pm-adding enzyme</fullName>
    </alternativeName>
    <alternativeName>
        <fullName evidence="1">Meso-diaminopimelate-adding enzyme</fullName>
    </alternativeName>
    <alternativeName>
        <fullName evidence="1">UDP-MurNAc-L-Ala-D-Glu:meso-diaminopimelate ligase</fullName>
    </alternativeName>
    <alternativeName>
        <fullName evidence="1">UDP-MurNAc-tripeptide synthetase</fullName>
    </alternativeName>
    <alternativeName>
        <fullName evidence="1">UDP-N-acetylmuramyl-tripeptide synthetase</fullName>
    </alternativeName>
</protein>
<accession>Q0I1D8</accession>
<gene>
    <name evidence="1" type="primary">murE</name>
    <name type="ordered locus">HS_0353</name>
</gene>
<dbReference type="EC" id="6.3.2.13" evidence="1"/>
<dbReference type="EMBL" id="CP000436">
    <property type="protein sequence ID" value="ABI24631.1"/>
    <property type="molecule type" value="Genomic_DNA"/>
</dbReference>
<dbReference type="SMR" id="Q0I1D8"/>
<dbReference type="KEGG" id="hso:HS_0353"/>
<dbReference type="eggNOG" id="COG0769">
    <property type="taxonomic scope" value="Bacteria"/>
</dbReference>
<dbReference type="HOGENOM" id="CLU_022291_4_1_6"/>
<dbReference type="UniPathway" id="UPA00219"/>
<dbReference type="GO" id="GO:0005737">
    <property type="term" value="C:cytoplasm"/>
    <property type="evidence" value="ECO:0007669"/>
    <property type="project" value="UniProtKB-SubCell"/>
</dbReference>
<dbReference type="GO" id="GO:0005524">
    <property type="term" value="F:ATP binding"/>
    <property type="evidence" value="ECO:0007669"/>
    <property type="project" value="UniProtKB-UniRule"/>
</dbReference>
<dbReference type="GO" id="GO:0000287">
    <property type="term" value="F:magnesium ion binding"/>
    <property type="evidence" value="ECO:0007669"/>
    <property type="project" value="UniProtKB-UniRule"/>
</dbReference>
<dbReference type="GO" id="GO:0008765">
    <property type="term" value="F:UDP-N-acetylmuramoylalanyl-D-glutamate-2,6-diaminopimelate ligase activity"/>
    <property type="evidence" value="ECO:0007669"/>
    <property type="project" value="UniProtKB-UniRule"/>
</dbReference>
<dbReference type="GO" id="GO:0051301">
    <property type="term" value="P:cell division"/>
    <property type="evidence" value="ECO:0007669"/>
    <property type="project" value="UniProtKB-KW"/>
</dbReference>
<dbReference type="GO" id="GO:0071555">
    <property type="term" value="P:cell wall organization"/>
    <property type="evidence" value="ECO:0007669"/>
    <property type="project" value="UniProtKB-KW"/>
</dbReference>
<dbReference type="GO" id="GO:0009252">
    <property type="term" value="P:peptidoglycan biosynthetic process"/>
    <property type="evidence" value="ECO:0007669"/>
    <property type="project" value="UniProtKB-UniRule"/>
</dbReference>
<dbReference type="GO" id="GO:0008360">
    <property type="term" value="P:regulation of cell shape"/>
    <property type="evidence" value="ECO:0007669"/>
    <property type="project" value="UniProtKB-KW"/>
</dbReference>
<dbReference type="FunFam" id="3.90.190.20:FF:000006">
    <property type="entry name" value="UDP-N-acetylmuramoyl-L-alanyl-D-glutamate--2,6-diaminopimelate ligase"/>
    <property type="match status" value="1"/>
</dbReference>
<dbReference type="Gene3D" id="3.90.190.20">
    <property type="entry name" value="Mur ligase, C-terminal domain"/>
    <property type="match status" value="1"/>
</dbReference>
<dbReference type="Gene3D" id="3.40.1190.10">
    <property type="entry name" value="Mur-like, catalytic domain"/>
    <property type="match status" value="1"/>
</dbReference>
<dbReference type="Gene3D" id="3.40.1390.10">
    <property type="entry name" value="MurE/MurF, N-terminal domain"/>
    <property type="match status" value="1"/>
</dbReference>
<dbReference type="HAMAP" id="MF_00208">
    <property type="entry name" value="MurE"/>
    <property type="match status" value="1"/>
</dbReference>
<dbReference type="InterPro" id="IPR036565">
    <property type="entry name" value="Mur-like_cat_sf"/>
</dbReference>
<dbReference type="InterPro" id="IPR004101">
    <property type="entry name" value="Mur_ligase_C"/>
</dbReference>
<dbReference type="InterPro" id="IPR036615">
    <property type="entry name" value="Mur_ligase_C_dom_sf"/>
</dbReference>
<dbReference type="InterPro" id="IPR013221">
    <property type="entry name" value="Mur_ligase_cen"/>
</dbReference>
<dbReference type="InterPro" id="IPR000713">
    <property type="entry name" value="Mur_ligase_N"/>
</dbReference>
<dbReference type="InterPro" id="IPR035911">
    <property type="entry name" value="MurE/MurF_N"/>
</dbReference>
<dbReference type="InterPro" id="IPR005761">
    <property type="entry name" value="UDP-N-AcMur-Glu-dNH2Pim_ligase"/>
</dbReference>
<dbReference type="NCBIfam" id="TIGR01085">
    <property type="entry name" value="murE"/>
    <property type="match status" value="1"/>
</dbReference>
<dbReference type="NCBIfam" id="NF001123">
    <property type="entry name" value="PRK00139.1-1"/>
    <property type="match status" value="1"/>
</dbReference>
<dbReference type="NCBIfam" id="NF001124">
    <property type="entry name" value="PRK00139.1-2"/>
    <property type="match status" value="1"/>
</dbReference>
<dbReference type="NCBIfam" id="NF001126">
    <property type="entry name" value="PRK00139.1-4"/>
    <property type="match status" value="1"/>
</dbReference>
<dbReference type="PANTHER" id="PTHR23135">
    <property type="entry name" value="MUR LIGASE FAMILY MEMBER"/>
    <property type="match status" value="1"/>
</dbReference>
<dbReference type="PANTHER" id="PTHR23135:SF4">
    <property type="entry name" value="UDP-N-ACETYLMURAMOYL-L-ALANYL-D-GLUTAMATE--2,6-DIAMINOPIMELATE LIGASE MURE HOMOLOG, CHLOROPLASTIC"/>
    <property type="match status" value="1"/>
</dbReference>
<dbReference type="Pfam" id="PF01225">
    <property type="entry name" value="Mur_ligase"/>
    <property type="match status" value="1"/>
</dbReference>
<dbReference type="Pfam" id="PF02875">
    <property type="entry name" value="Mur_ligase_C"/>
    <property type="match status" value="1"/>
</dbReference>
<dbReference type="Pfam" id="PF08245">
    <property type="entry name" value="Mur_ligase_M"/>
    <property type="match status" value="1"/>
</dbReference>
<dbReference type="SUPFAM" id="SSF53623">
    <property type="entry name" value="MurD-like peptide ligases, catalytic domain"/>
    <property type="match status" value="1"/>
</dbReference>
<dbReference type="SUPFAM" id="SSF53244">
    <property type="entry name" value="MurD-like peptide ligases, peptide-binding domain"/>
    <property type="match status" value="1"/>
</dbReference>
<dbReference type="SUPFAM" id="SSF63418">
    <property type="entry name" value="MurE/MurF N-terminal domain"/>
    <property type="match status" value="1"/>
</dbReference>
<reference key="1">
    <citation type="journal article" date="2007" name="J. Bacteriol.">
        <title>Complete genome sequence of Haemophilus somnus (Histophilus somni) strain 129Pt and comparison to Haemophilus ducreyi 35000HP and Haemophilus influenzae Rd.</title>
        <authorList>
            <person name="Challacombe J.F."/>
            <person name="Duncan A.J."/>
            <person name="Brettin T.S."/>
            <person name="Bruce D."/>
            <person name="Chertkov O."/>
            <person name="Detter J.C."/>
            <person name="Han C.S."/>
            <person name="Misra M."/>
            <person name="Richardson P."/>
            <person name="Tapia R."/>
            <person name="Thayer N."/>
            <person name="Xie G."/>
            <person name="Inzana T.J."/>
        </authorList>
    </citation>
    <scope>NUCLEOTIDE SEQUENCE [LARGE SCALE GENOMIC DNA]</scope>
    <source>
        <strain>129Pt</strain>
    </source>
</reference>
<proteinExistence type="inferred from homology"/>